<name>SRD51_CAEEL</name>
<organism>
    <name type="scientific">Caenorhabditis elegans</name>
    <dbReference type="NCBI Taxonomy" id="6239"/>
    <lineage>
        <taxon>Eukaryota</taxon>
        <taxon>Metazoa</taxon>
        <taxon>Ecdysozoa</taxon>
        <taxon>Nematoda</taxon>
        <taxon>Chromadorea</taxon>
        <taxon>Rhabditida</taxon>
        <taxon>Rhabditina</taxon>
        <taxon>Rhabditomorpha</taxon>
        <taxon>Rhabditoidea</taxon>
        <taxon>Rhabditidae</taxon>
        <taxon>Peloderinae</taxon>
        <taxon>Caenorhabditis</taxon>
    </lineage>
</organism>
<keyword id="KW-0472">Membrane</keyword>
<keyword id="KW-1185">Reference proteome</keyword>
<keyword id="KW-0812">Transmembrane</keyword>
<keyword id="KW-1133">Transmembrane helix</keyword>
<accession>Q19473</accession>
<protein>
    <recommendedName>
        <fullName>Serpentine receptor class delta-51</fullName>
        <shortName>Protein srd-51</shortName>
    </recommendedName>
</protein>
<gene>
    <name type="primary">srd-51</name>
    <name type="ORF">F15A2.3</name>
</gene>
<reference key="1">
    <citation type="journal article" date="1998" name="Science">
        <title>Genome sequence of the nematode C. elegans: a platform for investigating biology.</title>
        <authorList>
            <consortium name="The C. elegans sequencing consortium"/>
        </authorList>
    </citation>
    <scope>NUCLEOTIDE SEQUENCE [LARGE SCALE GENOMIC DNA]</scope>
    <source>
        <strain>Bristol N2</strain>
    </source>
</reference>
<evidence type="ECO:0000255" key="1"/>
<evidence type="ECO:0000305" key="2"/>
<dbReference type="EMBL" id="Z70207">
    <property type="protein sequence ID" value="CAA94132.1"/>
    <property type="molecule type" value="Genomic_DNA"/>
</dbReference>
<dbReference type="PIR" id="T20946">
    <property type="entry name" value="T20946"/>
</dbReference>
<dbReference type="RefSeq" id="NP_510252.1">
    <property type="nucleotide sequence ID" value="NM_077851.2"/>
</dbReference>
<dbReference type="SMR" id="Q19473"/>
<dbReference type="FunCoup" id="Q19473">
    <property type="interactions" value="14"/>
</dbReference>
<dbReference type="PaxDb" id="6239-F15A2.3"/>
<dbReference type="EnsemblMetazoa" id="F15A2.3.1">
    <property type="protein sequence ID" value="F15A2.3.1"/>
    <property type="gene ID" value="WBGene00005129"/>
</dbReference>
<dbReference type="GeneID" id="184506"/>
<dbReference type="KEGG" id="cel:CELE_F15A2.3"/>
<dbReference type="UCSC" id="F15A2.3">
    <property type="organism name" value="c. elegans"/>
</dbReference>
<dbReference type="AGR" id="WB:WBGene00005129"/>
<dbReference type="CTD" id="184506"/>
<dbReference type="WormBase" id="F15A2.3">
    <property type="protein sequence ID" value="CE15836"/>
    <property type="gene ID" value="WBGene00005129"/>
    <property type="gene designation" value="srd-51"/>
</dbReference>
<dbReference type="eggNOG" id="ENOG502TGB2">
    <property type="taxonomic scope" value="Eukaryota"/>
</dbReference>
<dbReference type="GeneTree" id="ENSGT00970000195825"/>
<dbReference type="HOGENOM" id="CLU_057924_2_0_1"/>
<dbReference type="InParanoid" id="Q19473"/>
<dbReference type="OMA" id="QCRPVAN"/>
<dbReference type="OrthoDB" id="5816804at2759"/>
<dbReference type="PhylomeDB" id="Q19473"/>
<dbReference type="PRO" id="PR:Q19473"/>
<dbReference type="Proteomes" id="UP000001940">
    <property type="component" value="Chromosome X"/>
</dbReference>
<dbReference type="Bgee" id="WBGene00005129">
    <property type="expression patterns" value="Expressed in pharyngeal muscle cell (C elegans)"/>
</dbReference>
<dbReference type="GO" id="GO:0016020">
    <property type="term" value="C:membrane"/>
    <property type="evidence" value="ECO:0007669"/>
    <property type="project" value="UniProtKB-SubCell"/>
</dbReference>
<dbReference type="Gene3D" id="1.20.1070.10">
    <property type="entry name" value="Rhodopsin 7-helix transmembrane proteins"/>
    <property type="match status" value="1"/>
</dbReference>
<dbReference type="InterPro" id="IPR019421">
    <property type="entry name" value="7TM_GPCR_serpentine_rcpt_Srd"/>
</dbReference>
<dbReference type="InterPro" id="IPR050920">
    <property type="entry name" value="Nematode_rcpt-like_delta"/>
</dbReference>
<dbReference type="PANTHER" id="PTHR22945:SF33">
    <property type="entry name" value="SERPENTINE RECEPTOR CLASS DELTA-51"/>
    <property type="match status" value="1"/>
</dbReference>
<dbReference type="PANTHER" id="PTHR22945">
    <property type="entry name" value="SERPENTINE RECEPTOR, CLASS D DELTA"/>
    <property type="match status" value="1"/>
</dbReference>
<dbReference type="Pfam" id="PF10317">
    <property type="entry name" value="7TM_GPCR_Srd"/>
    <property type="match status" value="1"/>
</dbReference>
<dbReference type="SUPFAM" id="SSF81321">
    <property type="entry name" value="Family A G protein-coupled receptor-like"/>
    <property type="match status" value="1"/>
</dbReference>
<sequence length="336" mass="38630">MSEVEKKLEMFVTVYYSLNVTLALSINILLLFIMKTTKSSLLKDMQYYLFNTALFEIIVSLSTYFAQCRPVANKSTLAVFCHGPCKYFGKNTCFVTFAVVQCSVVAASFSILLSFYYRYRLLKVNFKKKHKHATTFIIFSFFPTVMLLFQLLTDSNFAIVEAETREMHPDYDYVNNALIGFSDSKSPAAIIAQSLISLGVYMSPLIAFHYRRKINKILSTNTGQRIPVAYCKQLINGLLIQTLIPFCVYIPPYSYFLYSQLSGHSNLYFEYLLNIFGSFTAFINPLLTFYFVLPYRRALCKKVFKYFPSISEEGTEITTFPTTVQFQRGHTASTKF</sequence>
<proteinExistence type="inferred from homology"/>
<feature type="chain" id="PRO_0000104530" description="Serpentine receptor class delta-51">
    <location>
        <begin position="1"/>
        <end position="336"/>
    </location>
</feature>
<feature type="transmembrane region" description="Helical" evidence="1">
    <location>
        <begin position="14"/>
        <end position="34"/>
    </location>
</feature>
<feature type="transmembrane region" description="Helical" evidence="1">
    <location>
        <begin position="48"/>
        <end position="68"/>
    </location>
</feature>
<feature type="transmembrane region" description="Helical" evidence="1">
    <location>
        <begin position="93"/>
        <end position="113"/>
    </location>
</feature>
<feature type="transmembrane region" description="Helical" evidence="1">
    <location>
        <begin position="133"/>
        <end position="153"/>
    </location>
</feature>
<feature type="transmembrane region" description="Helical" evidence="1">
    <location>
        <begin position="188"/>
        <end position="208"/>
    </location>
</feature>
<feature type="transmembrane region" description="Helical" evidence="1">
    <location>
        <begin position="237"/>
        <end position="257"/>
    </location>
</feature>
<feature type="transmembrane region" description="Helical" evidence="1">
    <location>
        <begin position="275"/>
        <end position="295"/>
    </location>
</feature>
<comment type="subcellular location">
    <subcellularLocation>
        <location evidence="2">Membrane</location>
        <topology evidence="2">Multi-pass membrane protein</topology>
    </subcellularLocation>
</comment>
<comment type="similarity">
    <text evidence="2">Belongs to the nematode receptor-like protein srd family.</text>
</comment>